<accession>A5PKL1</accession>
<keyword id="KW-0496">Mitochondrion</keyword>
<keyword id="KW-0597">Phosphoprotein</keyword>
<keyword id="KW-1185">Reference proteome</keyword>
<keyword id="KW-0346">Stress response</keyword>
<feature type="chain" id="PRO_0000393586" description="Oxidation resistance protein 1">
    <location>
        <begin position="1"/>
        <end position="872"/>
    </location>
</feature>
<feature type="domain" description="LysM" evidence="4">
    <location>
        <begin position="98"/>
        <end position="141"/>
    </location>
</feature>
<feature type="domain" description="GRAM">
    <location>
        <begin position="212"/>
        <end position="268"/>
    </location>
</feature>
<feature type="domain" description="TLDc" evidence="5">
    <location>
        <begin position="711"/>
        <end position="872"/>
    </location>
</feature>
<feature type="region of interest" description="Disordered" evidence="6">
    <location>
        <begin position="1"/>
        <end position="86"/>
    </location>
</feature>
<feature type="region of interest" description="Disordered" evidence="6">
    <location>
        <begin position="150"/>
        <end position="187"/>
    </location>
</feature>
<feature type="region of interest" description="Disordered" evidence="6">
    <location>
        <begin position="314"/>
        <end position="338"/>
    </location>
</feature>
<feature type="region of interest" description="Mediates oxidative antimutator activity" evidence="1">
    <location>
        <begin position="549"/>
        <end position="576"/>
    </location>
</feature>
<feature type="compositionally biased region" description="Basic and acidic residues" evidence="6">
    <location>
        <begin position="63"/>
        <end position="86"/>
    </location>
</feature>
<feature type="compositionally biased region" description="Low complexity" evidence="6">
    <location>
        <begin position="150"/>
        <end position="168"/>
    </location>
</feature>
<feature type="compositionally biased region" description="Basic and acidic residues" evidence="6">
    <location>
        <begin position="170"/>
        <end position="184"/>
    </location>
</feature>
<feature type="modified residue" description="Phosphoserine" evidence="3">
    <location>
        <position position="90"/>
    </location>
</feature>
<feature type="modified residue" description="Phosphothreonine" evidence="2">
    <location>
        <position position="118"/>
    </location>
</feature>
<feature type="modified residue" description="Phosphoserine" evidence="3">
    <location>
        <position position="201"/>
    </location>
</feature>
<feature type="modified residue" description="Phosphoserine" evidence="3">
    <location>
        <position position="202"/>
    </location>
</feature>
<feature type="modified residue" description="Phosphoserine" evidence="3">
    <location>
        <position position="204"/>
    </location>
</feature>
<feature type="modified residue" description="Phosphoserine" evidence="3">
    <location>
        <position position="294"/>
    </location>
</feature>
<feature type="modified residue" description="Phosphoserine" evidence="2">
    <location>
        <position position="334"/>
    </location>
</feature>
<feature type="modified residue" description="Phosphoserine" evidence="2">
    <location>
        <position position="336"/>
    </location>
</feature>
<feature type="modified residue" description="Phosphothreonine" evidence="2">
    <location>
        <position position="341"/>
    </location>
</feature>
<feature type="modified residue" description="Phosphoserine" evidence="2">
    <location>
        <position position="346"/>
    </location>
</feature>
<feature type="modified residue" description="Phosphoserine" evidence="2">
    <location>
        <position position="496"/>
    </location>
</feature>
<reference key="1">
    <citation type="submission" date="2007-06" db="EMBL/GenBank/DDBJ databases">
        <authorList>
            <consortium name="NIH - Mammalian Gene Collection (MGC) project"/>
        </authorList>
    </citation>
    <scope>NUCLEOTIDE SEQUENCE [LARGE SCALE MRNA]</scope>
    <source>
        <strain>Hereford</strain>
        <tissue>Fetal cerebellum</tissue>
    </source>
</reference>
<dbReference type="EMBL" id="BC142527">
    <property type="protein sequence ID" value="AAI42528.1"/>
    <property type="status" value="ALT_INIT"/>
    <property type="molecule type" value="mRNA"/>
</dbReference>
<dbReference type="RefSeq" id="XP_024857468.1">
    <property type="nucleotide sequence ID" value="XM_025001700.1"/>
</dbReference>
<dbReference type="SMR" id="A5PKL1"/>
<dbReference type="FunCoup" id="A5PKL1">
    <property type="interactions" value="2492"/>
</dbReference>
<dbReference type="STRING" id="9913.ENSBTAP00000069923"/>
<dbReference type="PaxDb" id="9913-ENSBTAP00000050917"/>
<dbReference type="PeptideAtlas" id="A5PKL1"/>
<dbReference type="Ensembl" id="ENSBTAT00000085736.2">
    <property type="protein sequence ID" value="ENSBTAP00000069923.2"/>
    <property type="gene ID" value="ENSBTAG00000008285.7"/>
</dbReference>
<dbReference type="GeneID" id="539092"/>
<dbReference type="VGNC" id="VGNC:55069">
    <property type="gene designation" value="OXR1"/>
</dbReference>
<dbReference type="eggNOG" id="KOG2372">
    <property type="taxonomic scope" value="Eukaryota"/>
</dbReference>
<dbReference type="GeneTree" id="ENSGT00940000155187"/>
<dbReference type="HOGENOM" id="CLU_007095_2_0_1"/>
<dbReference type="InParanoid" id="A5PKL1"/>
<dbReference type="OrthoDB" id="26679at2759"/>
<dbReference type="Proteomes" id="UP000009136">
    <property type="component" value="Chromosome 14"/>
</dbReference>
<dbReference type="GO" id="GO:0005739">
    <property type="term" value="C:mitochondrion"/>
    <property type="evidence" value="ECO:0007669"/>
    <property type="project" value="UniProtKB-SubCell"/>
</dbReference>
<dbReference type="GO" id="GO:0005634">
    <property type="term" value="C:nucleus"/>
    <property type="evidence" value="ECO:0000318"/>
    <property type="project" value="GO_Central"/>
</dbReference>
<dbReference type="GO" id="GO:0006979">
    <property type="term" value="P:response to oxidative stress"/>
    <property type="evidence" value="ECO:0000318"/>
    <property type="project" value="GO_Central"/>
</dbReference>
<dbReference type="CDD" id="cd00118">
    <property type="entry name" value="LysM"/>
    <property type="match status" value="1"/>
</dbReference>
<dbReference type="FunFam" id="3.10.350.10:FF:000002">
    <property type="entry name" value="Oxidation resistance protein 1 isoform X1"/>
    <property type="match status" value="1"/>
</dbReference>
<dbReference type="Gene3D" id="3.10.350.10">
    <property type="entry name" value="LysM domain"/>
    <property type="match status" value="1"/>
</dbReference>
<dbReference type="InterPro" id="IPR018392">
    <property type="entry name" value="LysM_dom"/>
</dbReference>
<dbReference type="InterPro" id="IPR036779">
    <property type="entry name" value="LysM_dom_sf"/>
</dbReference>
<dbReference type="InterPro" id="IPR006571">
    <property type="entry name" value="TLDc_dom"/>
</dbReference>
<dbReference type="PANTHER" id="PTHR23354">
    <property type="entry name" value="NUCLEOLAR PROTEIN 7/ESTROGEN RECEPTOR COACTIVATOR-RELATED"/>
    <property type="match status" value="1"/>
</dbReference>
<dbReference type="PANTHER" id="PTHR23354:SF69">
    <property type="entry name" value="OXIDATION RESISTANCE PROTEIN 1"/>
    <property type="match status" value="1"/>
</dbReference>
<dbReference type="Pfam" id="PF01476">
    <property type="entry name" value="LysM"/>
    <property type="match status" value="1"/>
</dbReference>
<dbReference type="Pfam" id="PF07534">
    <property type="entry name" value="TLD"/>
    <property type="match status" value="1"/>
</dbReference>
<dbReference type="SMART" id="SM00257">
    <property type="entry name" value="LysM"/>
    <property type="match status" value="1"/>
</dbReference>
<dbReference type="SMART" id="SM00584">
    <property type="entry name" value="TLDc"/>
    <property type="match status" value="1"/>
</dbReference>
<dbReference type="SUPFAM" id="SSF54106">
    <property type="entry name" value="LysM domain"/>
    <property type="match status" value="1"/>
</dbReference>
<dbReference type="PROSITE" id="PS51782">
    <property type="entry name" value="LYSM"/>
    <property type="match status" value="1"/>
</dbReference>
<dbReference type="PROSITE" id="PS51886">
    <property type="entry name" value="TLDC"/>
    <property type="match status" value="1"/>
</dbReference>
<proteinExistence type="evidence at transcript level"/>
<protein>
    <recommendedName>
        <fullName>Oxidation resistance protein 1</fullName>
    </recommendedName>
</protein>
<sequence length="872" mass="98112">MSVTNLSWLKKKSQSVDITAPGFNPLAGAGKQMPQASKPPAPKTPIIEEEQNNAANSQKHPSRRSELKRFYTIDTGQKKTLDKKDGRRMSFQKPKGTVKYTVESRDSLNSIALKFDTTPNELVQLNKLFSRAVVTGQVLYVPDPEYVSSVESSPSLSPISPLSPTSSEAELEKTTTPDVVHPKEPTPSSAFTAVRPVRVVSSTSEEEEAFTEKFLKINCRYITSSKGTVSGVLLVTPNNIMFDPHKTDPLVQENGCEEYGIMCPMEEVMSAAMYKEILDSKIKESLPIEIDQLSGRDFCHLKKVTRSNTDELDSRIRDAANDSASTAPRSTEESLSEDVFTESELSPVREELISLDELRHDKSSGASSESVQTITQSGVECLAVISEAASTPDHLKSGSGHTANEVGTLSLKTGLNNLEMPTKEGDQAADNLQKISGLKEQSTGIKKDNQDFPLDENSLHQEEVEKESMPCGEAIELKQKQVVDKGKQGREQNQDSETEVEELRKLWKSHSMQQTKQQRETMQQVSQKEIKHKIATADIEGSALLKEKRRHRLHKFLCLRVRKPMRKTFVSQASATMQQYAQRDKKHEYWFAVPQERTDHLYAFFIQWSPETYAEDTGEYTKEPGFIVVKKIEESETNEDSTNEAAAREWEVVSVAEYHRRIDALNTEELRTLCRRLQITTREDINSKQSTPVKADLESESFRPNLSDPSHLLLPDQIIKLTKHLPPRTIGYPWTLVYGTRKHGTSLKTLYRTMTGLDTPVLMVIKDSDWQVFGAFASQPFKVSDGFYGNGETFVFTFCPEFEVFKWTGDNMFFIKGDMDSLAFGGGGGEFALWLDGDLYHGRSHSCKTFGNHTLSKKEDFCIQDIEIWAFK</sequence>
<gene>
    <name type="primary">OXR1</name>
</gene>
<comment type="function">
    <text evidence="1">May be involved in protection from oxidative damage.</text>
</comment>
<comment type="subcellular location">
    <subcellularLocation>
        <location evidence="1">Mitochondrion</location>
    </subcellularLocation>
</comment>
<comment type="similarity">
    <text evidence="7">Belongs to the OXR1 family.</text>
</comment>
<comment type="sequence caution" evidence="7">
    <conflict type="erroneous initiation">
        <sequence resource="EMBL-CDS" id="AAI42528"/>
    </conflict>
    <text>Truncated N-terminus.</text>
</comment>
<organism>
    <name type="scientific">Bos taurus</name>
    <name type="common">Bovine</name>
    <dbReference type="NCBI Taxonomy" id="9913"/>
    <lineage>
        <taxon>Eukaryota</taxon>
        <taxon>Metazoa</taxon>
        <taxon>Chordata</taxon>
        <taxon>Craniata</taxon>
        <taxon>Vertebrata</taxon>
        <taxon>Euteleostomi</taxon>
        <taxon>Mammalia</taxon>
        <taxon>Eutheria</taxon>
        <taxon>Laurasiatheria</taxon>
        <taxon>Artiodactyla</taxon>
        <taxon>Ruminantia</taxon>
        <taxon>Pecora</taxon>
        <taxon>Bovidae</taxon>
        <taxon>Bovinae</taxon>
        <taxon>Bos</taxon>
    </lineage>
</organism>
<name>OXR1_BOVIN</name>
<evidence type="ECO:0000250" key="1"/>
<evidence type="ECO:0000250" key="2">
    <source>
        <dbReference type="UniProtKB" id="Q4KMM3"/>
    </source>
</evidence>
<evidence type="ECO:0000250" key="3">
    <source>
        <dbReference type="UniProtKB" id="Q8N573"/>
    </source>
</evidence>
<evidence type="ECO:0000255" key="4">
    <source>
        <dbReference type="PROSITE-ProRule" id="PRU01118"/>
    </source>
</evidence>
<evidence type="ECO:0000255" key="5">
    <source>
        <dbReference type="PROSITE-ProRule" id="PRU01234"/>
    </source>
</evidence>
<evidence type="ECO:0000256" key="6">
    <source>
        <dbReference type="SAM" id="MobiDB-lite"/>
    </source>
</evidence>
<evidence type="ECO:0000305" key="7"/>